<proteinExistence type="evidence at protein level"/>
<evidence type="ECO:0000250" key="1">
    <source>
        <dbReference type="UniProtKB" id="Q5SJP7"/>
    </source>
</evidence>
<evidence type="ECO:0000269" key="2">
    <source>
    </source>
</evidence>
<evidence type="ECO:0000303" key="3">
    <source>
    </source>
</evidence>
<evidence type="ECO:0000305" key="4"/>
<evidence type="ECO:0000305" key="5">
    <source>
    </source>
</evidence>
<organism>
    <name type="scientific">Pseudomonas putida</name>
    <name type="common">Arthrobacter siderocapsulatus</name>
    <dbReference type="NCBI Taxonomy" id="303"/>
    <lineage>
        <taxon>Bacteria</taxon>
        <taxon>Pseudomonadati</taxon>
        <taxon>Pseudomonadota</taxon>
        <taxon>Gammaproteobacteria</taxon>
        <taxon>Pseudomonadales</taxon>
        <taxon>Pseudomonadaceae</taxon>
        <taxon>Pseudomonas</taxon>
    </lineage>
</organism>
<comment type="function">
    <text evidence="2">Catalyzes the reduction of FMN, and to a lesser extent, FAD, using NADH as an electron donor. Is able to provide the FMNH(2) required for the Baeyer-Villiger oxidations catalyzed by 2,5-diketocamphane monooxygenases and 3,6-diketocamphane monooxygenase. NADPH acts as a very poor cosubstrate.</text>
</comment>
<comment type="catalytic activity">
    <reaction evidence="2">
        <text>FMNH2 + NAD(+) = FMN + NADH + 2 H(+)</text>
        <dbReference type="Rhea" id="RHEA:21620"/>
        <dbReference type="ChEBI" id="CHEBI:15378"/>
        <dbReference type="ChEBI" id="CHEBI:57540"/>
        <dbReference type="ChEBI" id="CHEBI:57618"/>
        <dbReference type="ChEBI" id="CHEBI:57945"/>
        <dbReference type="ChEBI" id="CHEBI:58210"/>
        <dbReference type="EC" id="1.5.1.42"/>
    </reaction>
</comment>
<comment type="catalytic activity">
    <reaction evidence="2">
        <text>FADH2 + NAD(+) = FAD + NADH + 2 H(+)</text>
        <dbReference type="Rhea" id="RHEA:30147"/>
        <dbReference type="ChEBI" id="CHEBI:15378"/>
        <dbReference type="ChEBI" id="CHEBI:57540"/>
        <dbReference type="ChEBI" id="CHEBI:57692"/>
        <dbReference type="ChEBI" id="CHEBI:57945"/>
        <dbReference type="ChEBI" id="CHEBI:58307"/>
        <dbReference type="EC" id="1.5.1.37"/>
    </reaction>
</comment>
<comment type="biophysicochemical properties">
    <kinetics>
        <KM evidence="2">3.6 uM for FMN</KM>
        <KM evidence="2">19 uM for FAD</KM>
        <KM evidence="2">32 uM for NADH</KM>
        <text>kcat is 283 sec(-1) for the reduction of FMN. kcat is 128 sec(-1) for the reduction of FAD.</text>
    </kinetics>
    <phDependence>
        <text evidence="2">Optimum pH is 7.5 in Tris/HCl buffer.</text>
    </phDependence>
    <temperatureDependence>
        <text evidence="2">Optimum temperature is 30-35 degrees Celsius. Has a half-life of about 80 minutes at 25 degrees Celsius.</text>
    </temperatureDependence>
</comment>
<comment type="subunit">
    <text evidence="2">Homodimer. Likely forms a loose transient complex with monooxygenases for which it provides FMNH(2).</text>
</comment>
<comment type="induction">
    <text evidence="2">By (+)-camphor.</text>
</comment>
<comment type="similarity">
    <text evidence="4">Belongs to the non-flavoprotein flavin reductase family.</text>
</comment>
<sequence>MTKVAAEIVRSAIDPQWFRAVLGQYPTGVCAVTAMDPDGKMSGMAVGSFTSVSLNPPLVAFLPDRSSTSWPKIERAGKFCVNVLSDQQLGVCKRFASKDEDKFSGLVYRLSDNGSPIIEGVVAWIDCDLHSVQEAGDHYIVIGSVRELQVESEDSALLFYRGGYGGFAAI</sequence>
<protein>
    <recommendedName>
        <fullName evidence="3">Flavin reductase</fullName>
        <shortName evidence="3">Fred</shortName>
    </recommendedName>
    <alternativeName>
        <fullName evidence="5">FAD reductase</fullName>
        <ecNumber evidence="2">1.5.1.37</ecNumber>
    </alternativeName>
    <alternativeName>
        <fullName evidence="3">FMN reductase</fullName>
        <ecNumber evidence="2">1.5.1.42</ecNumber>
    </alternativeName>
</protein>
<dbReference type="EC" id="1.5.1.37" evidence="2"/>
<dbReference type="EC" id="1.5.1.42" evidence="2"/>
<dbReference type="EMBL" id="KC349947">
    <property type="protein sequence ID" value="AGI42835.1"/>
    <property type="molecule type" value="Genomic_DNA"/>
</dbReference>
<dbReference type="SMR" id="M4YFG7"/>
<dbReference type="BRENDA" id="1.5.1.37">
    <property type="organism ID" value="5092"/>
</dbReference>
<dbReference type="BRENDA" id="1.5.1.42">
    <property type="organism ID" value="5092"/>
</dbReference>
<dbReference type="GO" id="GO:0010181">
    <property type="term" value="F:FMN binding"/>
    <property type="evidence" value="ECO:0007669"/>
    <property type="project" value="InterPro"/>
</dbReference>
<dbReference type="GO" id="GO:0052874">
    <property type="term" value="F:FMN reductase (NADH) activity"/>
    <property type="evidence" value="ECO:0007669"/>
    <property type="project" value="UniProtKB-EC"/>
</dbReference>
<dbReference type="GO" id="GO:0042602">
    <property type="term" value="F:riboflavin reductase (NADPH) activity"/>
    <property type="evidence" value="ECO:0007669"/>
    <property type="project" value="TreeGrafter"/>
</dbReference>
<dbReference type="Gene3D" id="2.30.110.10">
    <property type="entry name" value="Electron Transport, Fmn-binding Protein, Chain A"/>
    <property type="match status" value="1"/>
</dbReference>
<dbReference type="InterPro" id="IPR002563">
    <property type="entry name" value="Flavin_Rdtase-like_dom"/>
</dbReference>
<dbReference type="InterPro" id="IPR050268">
    <property type="entry name" value="NADH-dep_flavin_reductase"/>
</dbReference>
<dbReference type="InterPro" id="IPR012349">
    <property type="entry name" value="Split_barrel_FMN-bd"/>
</dbReference>
<dbReference type="PANTHER" id="PTHR30466">
    <property type="entry name" value="FLAVIN REDUCTASE"/>
    <property type="match status" value="1"/>
</dbReference>
<dbReference type="PANTHER" id="PTHR30466:SF11">
    <property type="entry name" value="FLAVIN-DEPENDENT MONOOXYGENASE, REDUCTASE SUBUNIT HSAB"/>
    <property type="match status" value="1"/>
</dbReference>
<dbReference type="Pfam" id="PF01613">
    <property type="entry name" value="Flavin_Reduct"/>
    <property type="match status" value="1"/>
</dbReference>
<dbReference type="SMART" id="SM00903">
    <property type="entry name" value="Flavin_Reduct"/>
    <property type="match status" value="1"/>
</dbReference>
<dbReference type="SUPFAM" id="SSF50475">
    <property type="entry name" value="FMN-binding split barrel"/>
    <property type="match status" value="1"/>
</dbReference>
<accession>M4YFG7</accession>
<name>FRED_PSEPU</name>
<feature type="initiator methionine" description="Removed" evidence="2">
    <location>
        <position position="1"/>
    </location>
</feature>
<feature type="chain" id="PRO_0000444573" description="Flavin reductase">
    <location>
        <begin position="2"/>
        <end position="170"/>
    </location>
</feature>
<feature type="binding site" evidence="1">
    <location>
        <position position="51"/>
    </location>
    <ligand>
        <name>NAD(+)</name>
        <dbReference type="ChEBI" id="CHEBI:57540"/>
    </ligand>
</feature>
<feature type="binding site" evidence="1">
    <location>
        <position position="138"/>
    </location>
    <ligand>
        <name>NAD(+)</name>
        <dbReference type="ChEBI" id="CHEBI:57540"/>
    </ligand>
</feature>
<feature type="binding site" evidence="1">
    <location>
        <begin position="159"/>
        <end position="162"/>
    </location>
    <ligand>
        <name>NAD(+)</name>
        <dbReference type="ChEBI" id="CHEBI:57540"/>
    </ligand>
</feature>
<keyword id="KW-0903">Direct protein sequencing</keyword>
<keyword id="KW-0274">FAD</keyword>
<keyword id="KW-0285">Flavoprotein</keyword>
<keyword id="KW-0288">FMN</keyword>
<keyword id="KW-0520">NAD</keyword>
<keyword id="KW-0560">Oxidoreductase</keyword>
<reference key="1">
    <citation type="journal article" date="2013" name="Appl. Environ. Microbiol.">
        <title>Camphor pathway redux: functional recombinant expression of 2,5- and 3,6-diketocamphane monooxygenases of Pseudomonas putida ATCC 17453 with their cognate flavin reductase catalyzing Baeyer-Villiger reactions.</title>
        <authorList>
            <person name="Iwaki H."/>
            <person name="Grosse S."/>
            <person name="Bergeron H."/>
            <person name="Leisch H."/>
            <person name="Morley K."/>
            <person name="Hasegawa Y."/>
            <person name="Lau P.C.K."/>
        </authorList>
    </citation>
    <scope>NUCLEOTIDE SEQUENCE [GENOMIC DNA]</scope>
    <scope>PROTEIN SEQUENCE OF 2-29 AND 45-68</scope>
    <scope>FUNCTION</scope>
    <scope>CATALYTIC ACTIVITY</scope>
    <scope>SUBSTRATE SPECIFICITY</scope>
    <scope>BIOPHYSICOCHEMICAL PROPERTIES</scope>
    <scope>INDUCTION</scope>
    <scope>SUBUNIT</scope>
    <source>
        <strain>ATCC 17453 / DSM 50198 / JCM 6157 / NCIMB 10007 / NRRL B-4067 / Stanier 77 / Biotype A</strain>
    </source>
</reference>